<organism>
    <name type="scientific">Escherichia coli (strain K12)</name>
    <dbReference type="NCBI Taxonomy" id="83333"/>
    <lineage>
        <taxon>Bacteria</taxon>
        <taxon>Pseudomonadati</taxon>
        <taxon>Pseudomonadota</taxon>
        <taxon>Gammaproteobacteria</taxon>
        <taxon>Enterobacterales</taxon>
        <taxon>Enterobacteriaceae</taxon>
        <taxon>Escherichia</taxon>
    </lineage>
</organism>
<comment type="function">
    <text evidence="1">Involved in the breakdown of putrescine via the oxidation of L-glutamylputrescine.</text>
</comment>
<comment type="catalytic activity">
    <reaction>
        <text>gamma-L-glutamylputrescine + O2 + H2O = 4-(gamma-L-glutamylamino)butanal + H2O2 + NH4(+)</text>
        <dbReference type="Rhea" id="RHEA:28414"/>
        <dbReference type="ChEBI" id="CHEBI:15377"/>
        <dbReference type="ChEBI" id="CHEBI:15379"/>
        <dbReference type="ChEBI" id="CHEBI:16240"/>
        <dbReference type="ChEBI" id="CHEBI:28938"/>
        <dbReference type="ChEBI" id="CHEBI:58731"/>
        <dbReference type="ChEBI" id="CHEBI:61508"/>
    </reaction>
</comment>
<comment type="pathway">
    <text>Amine and polyamine degradation; putrescine degradation; 4-aminobutanoate from putrescine: step 2/4.</text>
</comment>
<comment type="similarity">
    <text evidence="2">Belongs to the gamma-glutamylputrescine oxidoreductase family.</text>
</comment>
<keyword id="KW-0520">NAD</keyword>
<keyword id="KW-0560">Oxidoreductase</keyword>
<keyword id="KW-1185">Reference proteome</keyword>
<evidence type="ECO:0000269" key="1">
    <source>
    </source>
</evidence>
<evidence type="ECO:0000305" key="2"/>
<proteinExistence type="evidence at protein level"/>
<reference key="1">
    <citation type="submission" date="1995-10" db="EMBL/GenBank/DDBJ databases">
        <authorList>
            <person name="Jovanovic G."/>
        </authorList>
    </citation>
    <scope>NUCLEOTIDE SEQUENCE [GENOMIC DNA]</scope>
    <source>
        <strain>K12</strain>
    </source>
</reference>
<reference key="2">
    <citation type="journal article" date="2005" name="J. Biol. Chem.">
        <title>A novel putrescine utilization pathway involves gamma-glutamylated intermediates of Escherichia coli K-12.</title>
        <authorList>
            <person name="Kurihara S."/>
            <person name="Oda S."/>
            <person name="Kato K."/>
            <person name="Kim H.G."/>
            <person name="Koyanagi T."/>
            <person name="Kumagai H."/>
            <person name="Suzuki H."/>
        </authorList>
    </citation>
    <scope>NUCLEOTIDE SEQUENCE [GENOMIC DNA]</scope>
    <scope>FUNCTION AS A GAMMA-GLUTAMYLPUTRESCINE OXIDOREDUCTASE</scope>
    <scope>NOMENCLATURE</scope>
    <source>
        <strain>K12</strain>
    </source>
</reference>
<reference key="3">
    <citation type="journal article" date="1996" name="DNA Res.">
        <title>A 570-kb DNA sequence of the Escherichia coli K-12 genome corresponding to the 28.0-40.1 min region on the linkage map.</title>
        <authorList>
            <person name="Aiba H."/>
            <person name="Baba T."/>
            <person name="Fujita K."/>
            <person name="Hayashi K."/>
            <person name="Inada T."/>
            <person name="Isono K."/>
            <person name="Itoh T."/>
            <person name="Kasai H."/>
            <person name="Kashimoto K."/>
            <person name="Kimura S."/>
            <person name="Kitakawa M."/>
            <person name="Kitagawa M."/>
            <person name="Makino K."/>
            <person name="Miki T."/>
            <person name="Mizobuchi K."/>
            <person name="Mori H."/>
            <person name="Mori T."/>
            <person name="Motomura K."/>
            <person name="Nakade S."/>
            <person name="Nakamura Y."/>
            <person name="Nashimoto H."/>
            <person name="Nishio Y."/>
            <person name="Oshima T."/>
            <person name="Saito N."/>
            <person name="Sampei G."/>
            <person name="Seki Y."/>
            <person name="Sivasundaram S."/>
            <person name="Tagami H."/>
            <person name="Takeda J."/>
            <person name="Takemoto K."/>
            <person name="Takeuchi Y."/>
            <person name="Wada C."/>
            <person name="Yamamoto Y."/>
            <person name="Horiuchi T."/>
        </authorList>
    </citation>
    <scope>NUCLEOTIDE SEQUENCE [LARGE SCALE GENOMIC DNA]</scope>
    <source>
        <strain>K12 / W3110 / ATCC 27325 / DSM 5911</strain>
    </source>
</reference>
<reference key="4">
    <citation type="journal article" date="1997" name="Science">
        <title>The complete genome sequence of Escherichia coli K-12.</title>
        <authorList>
            <person name="Blattner F.R."/>
            <person name="Plunkett G. III"/>
            <person name="Bloch C.A."/>
            <person name="Perna N.T."/>
            <person name="Burland V."/>
            <person name="Riley M."/>
            <person name="Collado-Vides J."/>
            <person name="Glasner J.D."/>
            <person name="Rode C.K."/>
            <person name="Mayhew G.F."/>
            <person name="Gregor J."/>
            <person name="Davis N.W."/>
            <person name="Kirkpatrick H.A."/>
            <person name="Goeden M.A."/>
            <person name="Rose D.J."/>
            <person name="Mau B."/>
            <person name="Shao Y."/>
        </authorList>
    </citation>
    <scope>NUCLEOTIDE SEQUENCE [LARGE SCALE GENOMIC DNA]</scope>
    <source>
        <strain>K12 / MG1655 / ATCC 47076</strain>
    </source>
</reference>
<reference key="5">
    <citation type="journal article" date="2006" name="Mol. Syst. Biol.">
        <title>Highly accurate genome sequences of Escherichia coli K-12 strains MG1655 and W3110.</title>
        <authorList>
            <person name="Hayashi K."/>
            <person name="Morooka N."/>
            <person name="Yamamoto Y."/>
            <person name="Fujita K."/>
            <person name="Isono K."/>
            <person name="Choi S."/>
            <person name="Ohtsubo E."/>
            <person name="Baba T."/>
            <person name="Wanner B.L."/>
            <person name="Mori H."/>
            <person name="Horiuchi T."/>
        </authorList>
    </citation>
    <scope>NUCLEOTIDE SEQUENCE [LARGE SCALE GENOMIC DNA]</scope>
    <source>
        <strain>K12 / W3110 / ATCC 27325 / DSM 5911</strain>
    </source>
</reference>
<reference key="6">
    <citation type="journal article" date="1991" name="Gene">
        <title>Cloning an Escherichia coli gene encoding a protein remarkably similar to mammalian aldehyde dehydrogenases.</title>
        <authorList>
            <person name="Heim R."/>
            <person name="Strehler E.E."/>
        </authorList>
    </citation>
    <scope>NUCLEOTIDE SEQUENCE [GENOMIC DNA] OF 1-251</scope>
</reference>
<reference key="7">
    <citation type="journal article" date="1994" name="Nucleic Acids Res.">
        <title>Intrinsic and extrinsic approaches for detecting genes in a bacterial genome.</title>
        <authorList>
            <person name="Borodovsky M."/>
            <person name="Rudd K.E."/>
            <person name="Koonin E.V."/>
        </authorList>
    </citation>
    <scope>IDENTIFICATION</scope>
</reference>
<dbReference type="EC" id="1.4.3.-"/>
<dbReference type="EMBL" id="U38543">
    <property type="protein sequence ID" value="AAC45300.1"/>
    <property type="molecule type" value="Genomic_DNA"/>
</dbReference>
<dbReference type="EMBL" id="AB200320">
    <property type="protein sequence ID" value="BAD88709.1"/>
    <property type="molecule type" value="Genomic_DNA"/>
</dbReference>
<dbReference type="EMBL" id="U00096">
    <property type="protein sequence ID" value="AAC74383.1"/>
    <property type="molecule type" value="Genomic_DNA"/>
</dbReference>
<dbReference type="EMBL" id="AP009048">
    <property type="protein sequence ID" value="BAA14870.1"/>
    <property type="molecule type" value="Genomic_DNA"/>
</dbReference>
<dbReference type="EMBL" id="M38433">
    <property type="protein sequence ID" value="AAA23429.1"/>
    <property type="molecule type" value="Genomic_DNA"/>
</dbReference>
<dbReference type="PIR" id="H64878">
    <property type="entry name" value="H64878"/>
</dbReference>
<dbReference type="RefSeq" id="NP_415817.1">
    <property type="nucleotide sequence ID" value="NC_000913.3"/>
</dbReference>
<dbReference type="RefSeq" id="WP_000134870.1">
    <property type="nucleotide sequence ID" value="NZ_SSZK01000012.1"/>
</dbReference>
<dbReference type="SMR" id="P37906"/>
<dbReference type="BioGRID" id="4263527">
    <property type="interactions" value="32"/>
</dbReference>
<dbReference type="FunCoup" id="P37906">
    <property type="interactions" value="404"/>
</dbReference>
<dbReference type="IntAct" id="P37906">
    <property type="interactions" value="18"/>
</dbReference>
<dbReference type="STRING" id="511145.b1301"/>
<dbReference type="PaxDb" id="511145-b1301"/>
<dbReference type="EnsemblBacteria" id="AAC74383">
    <property type="protein sequence ID" value="AAC74383"/>
    <property type="gene ID" value="b1301"/>
</dbReference>
<dbReference type="GeneID" id="75203416"/>
<dbReference type="GeneID" id="945072"/>
<dbReference type="KEGG" id="ecj:JW1294"/>
<dbReference type="KEGG" id="eco:b1301"/>
<dbReference type="KEGG" id="ecoc:C3026_07635"/>
<dbReference type="PATRIC" id="fig|1411691.4.peg.978"/>
<dbReference type="EchoBASE" id="EB1769"/>
<dbReference type="eggNOG" id="COG0665">
    <property type="taxonomic scope" value="Bacteria"/>
</dbReference>
<dbReference type="HOGENOM" id="CLU_007884_3_0_6"/>
<dbReference type="InParanoid" id="P37906"/>
<dbReference type="OMA" id="AYSKEVW"/>
<dbReference type="OrthoDB" id="6925984at2"/>
<dbReference type="PhylomeDB" id="P37906"/>
<dbReference type="BioCyc" id="EcoCyc:EG11822-MONOMER"/>
<dbReference type="BioCyc" id="MetaCyc:EG11822-MONOMER"/>
<dbReference type="BRENDA" id="1.4.3.B1">
    <property type="organism ID" value="2026"/>
</dbReference>
<dbReference type="UniPathway" id="UPA00188">
    <property type="reaction ID" value="UER00881"/>
</dbReference>
<dbReference type="PRO" id="PR:P37906"/>
<dbReference type="Proteomes" id="UP000000625">
    <property type="component" value="Chromosome"/>
</dbReference>
<dbReference type="GO" id="GO:0005737">
    <property type="term" value="C:cytoplasm"/>
    <property type="evidence" value="ECO:0000318"/>
    <property type="project" value="GO_Central"/>
</dbReference>
<dbReference type="GO" id="GO:0016491">
    <property type="term" value="F:oxidoreductase activity"/>
    <property type="evidence" value="ECO:0000315"/>
    <property type="project" value="UniProtKB"/>
</dbReference>
<dbReference type="GO" id="GO:0009447">
    <property type="term" value="P:putrescine catabolic process"/>
    <property type="evidence" value="ECO:0000315"/>
    <property type="project" value="UniProtKB"/>
</dbReference>
<dbReference type="Gene3D" id="3.30.9.10">
    <property type="entry name" value="D-Amino Acid Oxidase, subunit A, domain 2"/>
    <property type="match status" value="1"/>
</dbReference>
<dbReference type="Gene3D" id="3.50.50.60">
    <property type="entry name" value="FAD/NAD(P)-binding domain"/>
    <property type="match status" value="1"/>
</dbReference>
<dbReference type="InterPro" id="IPR006076">
    <property type="entry name" value="FAD-dep_OxRdtase"/>
</dbReference>
<dbReference type="InterPro" id="IPR036188">
    <property type="entry name" value="FAD/NAD-bd_sf"/>
</dbReference>
<dbReference type="PANTHER" id="PTHR13847:SF275">
    <property type="entry name" value="GAMMA-GLUTAMYLPUTRESCINE OXIDOREDUCTASE"/>
    <property type="match status" value="1"/>
</dbReference>
<dbReference type="PANTHER" id="PTHR13847">
    <property type="entry name" value="SARCOSINE DEHYDROGENASE-RELATED"/>
    <property type="match status" value="1"/>
</dbReference>
<dbReference type="Pfam" id="PF01266">
    <property type="entry name" value="DAO"/>
    <property type="match status" value="1"/>
</dbReference>
<dbReference type="SUPFAM" id="SSF51905">
    <property type="entry name" value="FAD/NAD(P)-binding domain"/>
    <property type="match status" value="1"/>
</dbReference>
<sequence length="426" mass="47170">MTEHTSSYYAASANKYAPFDTLNESITCDVCVVGGGYTGLSSALHLAEAGFDVVVLEASRIGFGASGRNGGQLVNSYSRDIDVIEKSYGMDTARMLGSMMFEGGEIIRERIKRYQIDCDYRPGGLFVAMNDKQLATLEEQKENWERYGNKQLELLDANAIRREVASDRYTGALLDHSGGHIHPLNLAIGEADAIRLNGGRVYELSAVTQIQHTTPAVVRTAKGQVTAKYVIVAGNAYLGDKVEPELAKRSMPCGTQVITTERLSEDLARSLIPKNYCVEDCNYLLDYYRLTADNRLLYGGGVVYGARDPDDVERLVVPKLLKTFPQLKGVKIDYRWTGNFLLTLSRMPQFGRLDTNIYYMQGYSGHGVTCTHLAGRLIAELLRGDAERFDAFANLPHYPFPGGRTLRVPFTAMGAAYYSLRDRLGV</sequence>
<name>PUUB_ECOLI</name>
<gene>
    <name type="primary">puuB</name>
    <name type="synonym">ordL</name>
    <name type="synonym">ycjA</name>
    <name type="ordered locus">b1301</name>
    <name type="ordered locus">JW1294</name>
</gene>
<accession>P37906</accession>
<accession>Q5H773</accession>
<protein>
    <recommendedName>
        <fullName>Gamma-glutamylputrescine oxidoreductase</fullName>
        <shortName>Gamma-Glu-Put oxidase</shortName>
        <shortName>Gamma-glutamylputrescine oxidase</shortName>
        <ecNumber>1.4.3.-</ecNumber>
    </recommendedName>
</protein>
<feature type="chain" id="PRO_0000097109" description="Gamma-glutamylputrescine oxidoreductase">
    <location>
        <begin position="1"/>
        <end position="426"/>
    </location>
</feature>